<reference key="1">
    <citation type="journal article" date="2003" name="Proc. Natl. Acad. Sci. U.S.A.">
        <title>The complete genome sequence of Mycobacterium bovis.</title>
        <authorList>
            <person name="Garnier T."/>
            <person name="Eiglmeier K."/>
            <person name="Camus J.-C."/>
            <person name="Medina N."/>
            <person name="Mansoor H."/>
            <person name="Pryor M."/>
            <person name="Duthoy S."/>
            <person name="Grondin S."/>
            <person name="Lacroix C."/>
            <person name="Monsempe C."/>
            <person name="Simon S."/>
            <person name="Harris B."/>
            <person name="Atkin R."/>
            <person name="Doggett J."/>
            <person name="Mayes R."/>
            <person name="Keating L."/>
            <person name="Wheeler P.R."/>
            <person name="Parkhill J."/>
            <person name="Barrell B.G."/>
            <person name="Cole S.T."/>
            <person name="Gordon S.V."/>
            <person name="Hewinson R.G."/>
        </authorList>
    </citation>
    <scope>NUCLEOTIDE SEQUENCE [LARGE SCALE GENOMIC DNA]</scope>
    <source>
        <strain>ATCC BAA-935 / AF2122/97</strain>
    </source>
</reference>
<reference key="2">
    <citation type="journal article" date="2017" name="Genome Announc.">
        <title>Updated reference genome sequence and annotation of Mycobacterium bovis AF2122/97.</title>
        <authorList>
            <person name="Malone K.M."/>
            <person name="Farrell D."/>
            <person name="Stuber T.P."/>
            <person name="Schubert O.T."/>
            <person name="Aebersold R."/>
            <person name="Robbe-Austerman S."/>
            <person name="Gordon S.V."/>
        </authorList>
    </citation>
    <scope>NUCLEOTIDE SEQUENCE [LARGE SCALE GENOMIC DNA]</scope>
    <scope>GENOME REANNOTATION</scope>
    <source>
        <strain>ATCC BAA-935 / AF2122/97</strain>
    </source>
</reference>
<organism>
    <name type="scientific">Mycobacterium bovis (strain ATCC BAA-935 / AF2122/97)</name>
    <dbReference type="NCBI Taxonomy" id="233413"/>
    <lineage>
        <taxon>Bacteria</taxon>
        <taxon>Bacillati</taxon>
        <taxon>Actinomycetota</taxon>
        <taxon>Actinomycetes</taxon>
        <taxon>Mycobacteriales</taxon>
        <taxon>Mycobacteriaceae</taxon>
        <taxon>Mycobacterium</taxon>
        <taxon>Mycobacterium tuberculosis complex</taxon>
    </lineage>
</organism>
<feature type="chain" id="PRO_0000103645" description="Uncharacterized protein Mb0028">
    <location>
        <begin position="1"/>
        <end position="105"/>
    </location>
</feature>
<proteinExistence type="predicted"/>
<dbReference type="EMBL" id="LT708304">
    <property type="protein sequence ID" value="SIT98378.1"/>
    <property type="molecule type" value="Genomic_DNA"/>
</dbReference>
<dbReference type="RefSeq" id="NP_853697.1">
    <property type="nucleotide sequence ID" value="NC_002945.3"/>
</dbReference>
<dbReference type="RefSeq" id="WP_003400401.1">
    <property type="nucleotide sequence ID" value="NC_002945.4"/>
</dbReference>
<dbReference type="SMR" id="P64668"/>
<dbReference type="KEGG" id="mbo:BQ2027_MB0028"/>
<dbReference type="PATRIC" id="fig|233413.5.peg.33"/>
<dbReference type="Proteomes" id="UP000001419">
    <property type="component" value="Chromosome"/>
</dbReference>
<dbReference type="GO" id="GO:0009306">
    <property type="term" value="P:protein secretion"/>
    <property type="evidence" value="ECO:0007669"/>
    <property type="project" value="InterPro"/>
</dbReference>
<dbReference type="InterPro" id="IPR022536">
    <property type="entry name" value="EspC"/>
</dbReference>
<dbReference type="Pfam" id="PF10824">
    <property type="entry name" value="T7SS_ESX_EspC"/>
    <property type="match status" value="1"/>
</dbReference>
<sequence length="105" mass="11910">MTDRIHVQPAHLRQAAAHHQQTADYLRTVPSSHDAIRESLDSLGPIFSELRDTGRELLELRKQCYQQQADNHADIAQNLRTSAAMWEQHERAASRSLGNIIDGSR</sequence>
<protein>
    <recommendedName>
        <fullName>Uncharacterized protein Mb0028</fullName>
    </recommendedName>
</protein>
<gene>
    <name type="ordered locus">BQ2027_MB0028</name>
</gene>
<name>Y028_MYCBO</name>
<accession>P64668</accession>
<accession>A0A1R3XWB2</accession>
<accession>P71597</accession>
<accession>X2BDT8</accession>
<keyword id="KW-1185">Reference proteome</keyword>